<accession>Q9Z1Q9</accession>
<accession>Q9QUN2</accession>
<dbReference type="EC" id="6.1.1.9"/>
<dbReference type="EMBL" id="AF087680">
    <property type="protein sequence ID" value="AAD26532.1"/>
    <property type="molecule type" value="mRNA"/>
</dbReference>
<dbReference type="EMBL" id="AF087141">
    <property type="protein sequence ID" value="AAD26531.1"/>
    <property type="molecule type" value="Genomic_DNA"/>
</dbReference>
<dbReference type="EMBL" id="AF109905">
    <property type="protein sequence ID" value="AAC84151.1"/>
    <property type="molecule type" value="Genomic_DNA"/>
</dbReference>
<dbReference type="EMBL" id="AF109906">
    <property type="protein sequence ID" value="AAC84172.1"/>
    <property type="molecule type" value="Genomic_DNA"/>
</dbReference>
<dbReference type="CCDS" id="CCDS37593.1"/>
<dbReference type="RefSeq" id="NP_001411919.1">
    <property type="nucleotide sequence ID" value="NM_001424990.1"/>
</dbReference>
<dbReference type="RefSeq" id="NP_035820.3">
    <property type="nucleotide sequence ID" value="NM_011690.3"/>
</dbReference>
<dbReference type="RefSeq" id="XP_017172884.1">
    <property type="nucleotide sequence ID" value="XM_017317395.1"/>
</dbReference>
<dbReference type="SMR" id="Q9Z1Q9"/>
<dbReference type="BioGRID" id="204498">
    <property type="interactions" value="28"/>
</dbReference>
<dbReference type="FunCoup" id="Q9Z1Q9">
    <property type="interactions" value="3633"/>
</dbReference>
<dbReference type="IntAct" id="Q9Z1Q9">
    <property type="interactions" value="4"/>
</dbReference>
<dbReference type="STRING" id="10090.ENSMUSP00000084572"/>
<dbReference type="GlyGen" id="Q9Z1Q9">
    <property type="glycosylation" value="4 sites, 2 N-linked glycans (2 sites), 1 O-linked glycan (1 site)"/>
</dbReference>
<dbReference type="iPTMnet" id="Q9Z1Q9"/>
<dbReference type="MetOSite" id="Q9Z1Q9"/>
<dbReference type="PhosphoSitePlus" id="Q9Z1Q9"/>
<dbReference type="SwissPalm" id="Q9Z1Q9"/>
<dbReference type="jPOST" id="Q9Z1Q9"/>
<dbReference type="PaxDb" id="10090-ENSMUSP00000084572"/>
<dbReference type="ProteomicsDB" id="262923"/>
<dbReference type="Pumba" id="Q9Z1Q9"/>
<dbReference type="Antibodypedia" id="51277">
    <property type="antibodies" value="182 antibodies from 28 providers"/>
</dbReference>
<dbReference type="DNASU" id="22321"/>
<dbReference type="Ensembl" id="ENSMUST00000087315.14">
    <property type="protein sequence ID" value="ENSMUSP00000084572.8"/>
    <property type="gene ID" value="ENSMUSG00000007029.17"/>
</dbReference>
<dbReference type="GeneID" id="22321"/>
<dbReference type="KEGG" id="mmu:22321"/>
<dbReference type="UCSC" id="uc008cez.2">
    <property type="organism name" value="mouse"/>
</dbReference>
<dbReference type="AGR" id="MGI:90675"/>
<dbReference type="CTD" id="7407"/>
<dbReference type="MGI" id="MGI:90675">
    <property type="gene designation" value="Vars1"/>
</dbReference>
<dbReference type="VEuPathDB" id="HostDB:ENSMUSG00000007029"/>
<dbReference type="eggNOG" id="KOG0432">
    <property type="taxonomic scope" value="Eukaryota"/>
</dbReference>
<dbReference type="eggNOG" id="KOG0867">
    <property type="taxonomic scope" value="Eukaryota"/>
</dbReference>
<dbReference type="GeneTree" id="ENSGT00940000157775"/>
<dbReference type="HOGENOM" id="CLU_001493_0_1_1"/>
<dbReference type="InParanoid" id="Q9Z1Q9"/>
<dbReference type="OMA" id="LDTWMDS"/>
<dbReference type="PhylomeDB" id="Q9Z1Q9"/>
<dbReference type="TreeFam" id="TF300648"/>
<dbReference type="BioGRID-ORCS" id="22321">
    <property type="hits" value="24 hits in 80 CRISPR screens"/>
</dbReference>
<dbReference type="CD-CODE" id="CE726F99">
    <property type="entry name" value="Postsynaptic density"/>
</dbReference>
<dbReference type="ChiTaRS" id="Vars">
    <property type="organism name" value="mouse"/>
</dbReference>
<dbReference type="PRO" id="PR:Q9Z1Q9"/>
<dbReference type="Proteomes" id="UP000000589">
    <property type="component" value="Chromosome 17"/>
</dbReference>
<dbReference type="RNAct" id="Q9Z1Q9">
    <property type="molecule type" value="protein"/>
</dbReference>
<dbReference type="Bgee" id="ENSMUSG00000007029">
    <property type="expression patterns" value="Expressed in spermatid and 196 other cell types or tissues"/>
</dbReference>
<dbReference type="ExpressionAtlas" id="Q9Z1Q9">
    <property type="expression patterns" value="baseline and differential"/>
</dbReference>
<dbReference type="GO" id="GO:0005829">
    <property type="term" value="C:cytosol"/>
    <property type="evidence" value="ECO:0007669"/>
    <property type="project" value="Ensembl"/>
</dbReference>
<dbReference type="GO" id="GO:0005783">
    <property type="term" value="C:endoplasmic reticulum"/>
    <property type="evidence" value="ECO:0007669"/>
    <property type="project" value="Ensembl"/>
</dbReference>
<dbReference type="GO" id="GO:0005739">
    <property type="term" value="C:mitochondrion"/>
    <property type="evidence" value="ECO:0007005"/>
    <property type="project" value="MGI"/>
</dbReference>
<dbReference type="GO" id="GO:0002161">
    <property type="term" value="F:aminoacyl-tRNA deacylase activity"/>
    <property type="evidence" value="ECO:0007669"/>
    <property type="project" value="InterPro"/>
</dbReference>
<dbReference type="GO" id="GO:0005524">
    <property type="term" value="F:ATP binding"/>
    <property type="evidence" value="ECO:0007669"/>
    <property type="project" value="UniProtKB-KW"/>
</dbReference>
<dbReference type="GO" id="GO:0004832">
    <property type="term" value="F:valine-tRNA ligase activity"/>
    <property type="evidence" value="ECO:0007669"/>
    <property type="project" value="UniProtKB-EC"/>
</dbReference>
<dbReference type="GO" id="GO:0006438">
    <property type="term" value="P:valyl-tRNA aminoacylation"/>
    <property type="evidence" value="ECO:0007669"/>
    <property type="project" value="InterPro"/>
</dbReference>
<dbReference type="CDD" id="cd07962">
    <property type="entry name" value="Anticodon_Ia_Val"/>
    <property type="match status" value="1"/>
</dbReference>
<dbReference type="CDD" id="cd22249">
    <property type="entry name" value="UDM1_RNF168_RNF169-like"/>
    <property type="match status" value="1"/>
</dbReference>
<dbReference type="CDD" id="cd00817">
    <property type="entry name" value="ValRS_core"/>
    <property type="match status" value="1"/>
</dbReference>
<dbReference type="FunFam" id="1.20.1050.10:FF:000006">
    <property type="entry name" value="Elongation factor 1 gamma"/>
    <property type="match status" value="1"/>
</dbReference>
<dbReference type="FunFam" id="3.40.50.620:FF:000119">
    <property type="entry name" value="Putative valine--tRNA ligase-like"/>
    <property type="match status" value="1"/>
</dbReference>
<dbReference type="FunFam" id="1.10.287.380:FF:000002">
    <property type="entry name" value="Valine--tRNA ligase"/>
    <property type="match status" value="1"/>
</dbReference>
<dbReference type="FunFam" id="1.10.730.10:FF:000015">
    <property type="entry name" value="Valine--tRNA ligase"/>
    <property type="match status" value="1"/>
</dbReference>
<dbReference type="FunFam" id="3.90.740.10:FF:000030">
    <property type="entry name" value="valine--tRNA ligase"/>
    <property type="match status" value="1"/>
</dbReference>
<dbReference type="FunFam" id="3.40.50.620:FF:000020">
    <property type="entry name" value="Valine--tRNA ligase, mitochondrial"/>
    <property type="match status" value="1"/>
</dbReference>
<dbReference type="FunFam" id="3.90.740.10:FF:000008">
    <property type="entry name" value="Valine--tRNA ligase, mitochondrial"/>
    <property type="match status" value="1"/>
</dbReference>
<dbReference type="Gene3D" id="1.20.1050.10">
    <property type="match status" value="1"/>
</dbReference>
<dbReference type="Gene3D" id="3.40.50.620">
    <property type="entry name" value="HUPs"/>
    <property type="match status" value="2"/>
</dbReference>
<dbReference type="Gene3D" id="1.10.730.10">
    <property type="entry name" value="Isoleucyl-tRNA Synthetase, Domain 1"/>
    <property type="match status" value="1"/>
</dbReference>
<dbReference type="Gene3D" id="1.10.287.380">
    <property type="entry name" value="Valyl-tRNA synthetase, C-terminal domain"/>
    <property type="match status" value="1"/>
</dbReference>
<dbReference type="Gene3D" id="3.90.740.10">
    <property type="entry name" value="Valyl/Leucyl/Isoleucyl-tRNA synthetase, editing domain"/>
    <property type="match status" value="1"/>
</dbReference>
<dbReference type="HAMAP" id="MF_02004">
    <property type="entry name" value="Val_tRNA_synth_type1"/>
    <property type="match status" value="1"/>
</dbReference>
<dbReference type="InterPro" id="IPR001412">
    <property type="entry name" value="aa-tRNA-synth_I_CS"/>
</dbReference>
<dbReference type="InterPro" id="IPR002300">
    <property type="entry name" value="aa-tRNA-synth_Ia"/>
</dbReference>
<dbReference type="InterPro" id="IPR033705">
    <property type="entry name" value="Anticodon_Ia_Val"/>
</dbReference>
<dbReference type="InterPro" id="IPR010987">
    <property type="entry name" value="Glutathione-S-Trfase_C-like"/>
</dbReference>
<dbReference type="InterPro" id="IPR036282">
    <property type="entry name" value="Glutathione-S-Trfase_C_sf"/>
</dbReference>
<dbReference type="InterPro" id="IPR004046">
    <property type="entry name" value="GST_C"/>
</dbReference>
<dbReference type="InterPro" id="IPR013155">
    <property type="entry name" value="M/V/L/I-tRNA-synth_anticd-bd"/>
</dbReference>
<dbReference type="InterPro" id="IPR014729">
    <property type="entry name" value="Rossmann-like_a/b/a_fold"/>
</dbReference>
<dbReference type="InterPro" id="IPR009080">
    <property type="entry name" value="tRNAsynth_Ia_anticodon-bd"/>
</dbReference>
<dbReference type="InterPro" id="IPR037118">
    <property type="entry name" value="Val-tRNA_synth_C_sf"/>
</dbReference>
<dbReference type="InterPro" id="IPR009008">
    <property type="entry name" value="Val/Leu/Ile-tRNA-synth_edit"/>
</dbReference>
<dbReference type="InterPro" id="IPR002303">
    <property type="entry name" value="Valyl-tRNA_ligase"/>
</dbReference>
<dbReference type="NCBIfam" id="NF004349">
    <property type="entry name" value="PRK05729.1"/>
    <property type="match status" value="1"/>
</dbReference>
<dbReference type="NCBIfam" id="TIGR00422">
    <property type="entry name" value="valS"/>
    <property type="match status" value="1"/>
</dbReference>
<dbReference type="PANTHER" id="PTHR11946:SF109">
    <property type="entry name" value="VALINE--TRNA LIGASE"/>
    <property type="match status" value="1"/>
</dbReference>
<dbReference type="PANTHER" id="PTHR11946">
    <property type="entry name" value="VALYL-TRNA SYNTHETASES"/>
    <property type="match status" value="1"/>
</dbReference>
<dbReference type="Pfam" id="PF08264">
    <property type="entry name" value="Anticodon_1"/>
    <property type="match status" value="1"/>
</dbReference>
<dbReference type="Pfam" id="PF00043">
    <property type="entry name" value="GST_C"/>
    <property type="match status" value="1"/>
</dbReference>
<dbReference type="Pfam" id="PF00133">
    <property type="entry name" value="tRNA-synt_1"/>
    <property type="match status" value="1"/>
</dbReference>
<dbReference type="PRINTS" id="PR00986">
    <property type="entry name" value="TRNASYNTHVAL"/>
</dbReference>
<dbReference type="SUPFAM" id="SSF47323">
    <property type="entry name" value="Anticodon-binding domain of a subclass of class I aminoacyl-tRNA synthetases"/>
    <property type="match status" value="1"/>
</dbReference>
<dbReference type="SUPFAM" id="SSF47616">
    <property type="entry name" value="GST C-terminal domain-like"/>
    <property type="match status" value="1"/>
</dbReference>
<dbReference type="SUPFAM" id="SSF52374">
    <property type="entry name" value="Nucleotidylyl transferase"/>
    <property type="match status" value="1"/>
</dbReference>
<dbReference type="SUPFAM" id="SSF50677">
    <property type="entry name" value="ValRS/IleRS/LeuRS editing domain"/>
    <property type="match status" value="1"/>
</dbReference>
<dbReference type="PROSITE" id="PS00178">
    <property type="entry name" value="AA_TRNA_LIGASE_I"/>
    <property type="match status" value="1"/>
</dbReference>
<dbReference type="PROSITE" id="PS50405">
    <property type="entry name" value="GST_CTER"/>
    <property type="match status" value="1"/>
</dbReference>
<name>SYVC_MOUSE</name>
<proteinExistence type="evidence at protein level"/>
<protein>
    <recommendedName>
        <fullName>Valine--tRNA ligase</fullName>
        <ecNumber>6.1.1.9</ecNumber>
    </recommendedName>
    <alternativeName>
        <fullName>Protein G7a</fullName>
    </alternativeName>
    <alternativeName>
        <fullName>Valyl-tRNA synthetase</fullName>
        <shortName>ValRS</shortName>
    </alternativeName>
</protein>
<comment type="catalytic activity">
    <reaction>
        <text>tRNA(Val) + L-valine + ATP = L-valyl-tRNA(Val) + AMP + diphosphate</text>
        <dbReference type="Rhea" id="RHEA:10704"/>
        <dbReference type="Rhea" id="RHEA-COMP:9672"/>
        <dbReference type="Rhea" id="RHEA-COMP:9708"/>
        <dbReference type="ChEBI" id="CHEBI:30616"/>
        <dbReference type="ChEBI" id="CHEBI:33019"/>
        <dbReference type="ChEBI" id="CHEBI:57762"/>
        <dbReference type="ChEBI" id="CHEBI:78442"/>
        <dbReference type="ChEBI" id="CHEBI:78537"/>
        <dbReference type="ChEBI" id="CHEBI:456215"/>
        <dbReference type="EC" id="6.1.1.9"/>
    </reaction>
</comment>
<comment type="activity regulation">
    <text evidence="1">Can be regulated by protein kinase C-dependent phosphorylation.</text>
</comment>
<comment type="subunit">
    <text evidence="1">Forms high-molecular-mass aggregates with elongation factor 1.</text>
</comment>
<comment type="similarity">
    <text evidence="4">Belongs to the class-I aminoacyl-tRNA synthetase family.</text>
</comment>
<sequence length="1263" mass="140215">MSILYVSPHPDAFPSLRALIAARYGEAGDGPGWGGPHPRICLQPPPSSRTPFPPPRLPALEQGPGGLWVWGAPAVAQLLWPAGLGGPGGSRAAVLVQQWVSYADTELIPAACGATLPALGLRGPGQDPQAALGALGKALNPLEDWLRLHTYLAGDAPTLADLAAVTALLLPFRYVLDPSARRIWGNVTRWFNTCVRQPEFRAVLGEVALYSGARSVTQQPGSEVIAPQKTPAQLKKEAKKREKLEKFQQKQKTQQQPPHGEKKPKPEKKEKRDPGVITYDLPTPPGEKKDVSGAMPDSYSPQYVEAAWYPWWERQGFFKPEYGRPSVSAPNPRGVFMMCIPPPNVTGSLHLGHALTNAIQDSLTRWHRMRGETTLWNPGCDHAGIATQVVVEKKLWKERGLNRHQLGREAFLEEVWKWKAEKGDRIYHQLKKLGSSLDWDRACFTMDPKLSATVTEAFVRLHEEGVIYRSTRLVNWSCTLNSAISDIEVDKKELTGRTLLPVPGYKEKVEFGVLVSFAYKVQGSDSDEEVVVATTRIETMLGDVAVAVHPKDPRYQHLKGKCVVHPFLSRSLPIVFDDFVDMEFGTGAVKITPAHDQNDYEVGQRHRLEAISIMDSKGALINVPPPFLGLPRFEARKAVLAALKERGLFRGVKDNPMVVPLCNRSKDVVEPLLRPQWYVRCGEMAQAASAAVTRGDLRILPEAHQRTWHSWMDNIRDWCISRQLWWGHRIPAYFITVHDPAVPPGEDPDGRYWVSGRTEAEAREKAAREFGVSPDKISLQQDEDVLDTWFSSGLFPFSIFGWPNQSEDLSVFYPGTLLETGHDILFFWVARMVMLGLKLTGKLPFREVYLHAIVRDAHGRKMSKSLGNVIDPLDVIHGVSLQGLYDQLLNSNLDPSEVEKAKEGQKADFPAGIPECGTDALRFGLCAYTSQGRDINLDVNRILGYRHFCNKLWNATKFALRGLGKGFVPSATSKPEGHESLVDRWIRSRLTEAVRLSNEGFQAYDFPAITTAQYSFWLYELCDVYLECLKPVLNGVDQVAAECARQTLYTCLDVGLRLLSPFMPFVTEELFQRLPRRTPKAPASLCVTPYPEPSECSWKDPEAEAALELALSITRAVRSLRADYNLTRTRPDCFLEVADEATGALASAVSGYVQALASAGVVAVLALGAPAPQGCAVAVASDRCSIHLQLQGLVDPARELGKLQAKRSEAQRQAQRLQERRAASSYSAKVPLEVQEADEAKLQQTEAELRKVDEAIALFQKML</sequence>
<keyword id="KW-0007">Acetylation</keyword>
<keyword id="KW-0030">Aminoacyl-tRNA synthetase</keyword>
<keyword id="KW-0067">ATP-binding</keyword>
<keyword id="KW-0436">Ligase</keyword>
<keyword id="KW-0547">Nucleotide-binding</keyword>
<keyword id="KW-0597">Phosphoprotein</keyword>
<keyword id="KW-0648">Protein biosynthesis</keyword>
<keyword id="KW-1185">Reference proteome</keyword>
<reference key="1">
    <citation type="journal article" date="1999" name="Immunogenetics">
        <title>The sequence and organization of the mouse valyl-tRNA synthetase gene G7a/Bat6 located in the MHC class III region.</title>
        <authorList>
            <person name="Snoek M."/>
            <person name="van Vugt H."/>
        </authorList>
    </citation>
    <scope>NUCLEOTIDE SEQUENCE [GENOMIC DNA / MRNA]</scope>
    <source>
        <strain>BALB/cJ</strain>
        <strain>C57BL/RIJ</strain>
        <tissue>Brain</tissue>
    </source>
</reference>
<reference key="2">
    <citation type="journal article" date="2003" name="Genome Res.">
        <title>Analysis of the gene-dense major histocompatibility complex class III region and its comparison to mouse.</title>
        <authorList>
            <person name="Xie T."/>
            <person name="Rowen L."/>
            <person name="Aguado B."/>
            <person name="Ahearn M.E."/>
            <person name="Madan A."/>
            <person name="Qin S."/>
            <person name="Campbell R.D."/>
            <person name="Hood L."/>
        </authorList>
    </citation>
    <scope>NUCLEOTIDE SEQUENCE [LARGE SCALE GENOMIC DNA]</scope>
    <source>
        <strain>129</strain>
    </source>
</reference>
<reference key="3">
    <citation type="journal article" date="2010" name="Cell">
        <title>A tissue-specific atlas of mouse protein phosphorylation and expression.</title>
        <authorList>
            <person name="Huttlin E.L."/>
            <person name="Jedrychowski M.P."/>
            <person name="Elias J.E."/>
            <person name="Goswami T."/>
            <person name="Rad R."/>
            <person name="Beausoleil S.A."/>
            <person name="Villen J."/>
            <person name="Haas W."/>
            <person name="Sowa M.E."/>
            <person name="Gygi S.P."/>
        </authorList>
    </citation>
    <scope>IDENTIFICATION BY MASS SPECTROMETRY [LARGE SCALE ANALYSIS]</scope>
    <source>
        <tissue>Brain</tissue>
        <tissue>Brown adipose tissue</tissue>
        <tissue>Heart</tissue>
        <tissue>Kidney</tissue>
        <tissue>Liver</tissue>
        <tissue>Lung</tissue>
        <tissue>Pancreas</tissue>
        <tissue>Spleen</tissue>
        <tissue>Testis</tissue>
    </source>
</reference>
<evidence type="ECO:0000250" key="1"/>
<evidence type="ECO:0000250" key="2">
    <source>
        <dbReference type="UniProtKB" id="P26640"/>
    </source>
</evidence>
<evidence type="ECO:0000256" key="3">
    <source>
        <dbReference type="SAM" id="MobiDB-lite"/>
    </source>
</evidence>
<evidence type="ECO:0000305" key="4"/>
<organism>
    <name type="scientific">Mus musculus</name>
    <name type="common">Mouse</name>
    <dbReference type="NCBI Taxonomy" id="10090"/>
    <lineage>
        <taxon>Eukaryota</taxon>
        <taxon>Metazoa</taxon>
        <taxon>Chordata</taxon>
        <taxon>Craniata</taxon>
        <taxon>Vertebrata</taxon>
        <taxon>Euteleostomi</taxon>
        <taxon>Mammalia</taxon>
        <taxon>Eutheria</taxon>
        <taxon>Euarchontoglires</taxon>
        <taxon>Glires</taxon>
        <taxon>Rodentia</taxon>
        <taxon>Myomorpha</taxon>
        <taxon>Muroidea</taxon>
        <taxon>Muridae</taxon>
        <taxon>Murinae</taxon>
        <taxon>Mus</taxon>
        <taxon>Mus</taxon>
    </lineage>
</organism>
<feature type="initiator methionine" description="Removed" evidence="2">
    <location>
        <position position="1"/>
    </location>
</feature>
<feature type="chain" id="PRO_0000106254" description="Valine--tRNA ligase">
    <location>
        <begin position="2"/>
        <end position="1263"/>
    </location>
</feature>
<feature type="domain" description="GST C-terminal">
    <location>
        <begin position="89"/>
        <end position="219"/>
    </location>
</feature>
<feature type="region of interest" description="Disordered" evidence="3">
    <location>
        <begin position="218"/>
        <end position="294"/>
    </location>
</feature>
<feature type="short sequence motif" description="'HIGH' region">
    <location>
        <begin position="343"/>
        <end position="353"/>
    </location>
</feature>
<feature type="short sequence motif" description="'KMSKS' region">
    <location>
        <begin position="861"/>
        <end position="865"/>
    </location>
</feature>
<feature type="compositionally biased region" description="Basic and acidic residues" evidence="3">
    <location>
        <begin position="234"/>
        <end position="248"/>
    </location>
</feature>
<feature type="compositionally biased region" description="Basic and acidic residues" evidence="3">
    <location>
        <begin position="259"/>
        <end position="274"/>
    </location>
</feature>
<feature type="binding site" evidence="1">
    <location>
        <position position="864"/>
    </location>
    <ligand>
        <name>ATP</name>
        <dbReference type="ChEBI" id="CHEBI:30616"/>
    </ligand>
</feature>
<feature type="modified residue" description="N-acetylserine" evidence="2">
    <location>
        <position position="2"/>
    </location>
</feature>
<feature type="modified residue" description="Phosphoserine" evidence="2">
    <location>
        <position position="436"/>
    </location>
</feature>
<feature type="modified residue" description="Phosphoserine" evidence="2">
    <location>
        <position position="526"/>
    </location>
</feature>
<feature type="modified residue" description="N6-acetyllysine" evidence="2">
    <location>
        <position position="644"/>
    </location>
</feature>
<feature type="sequence conflict" description="In Ref. 1; AAD26532/AAD26531." evidence="4" ref="1">
    <original>A</original>
    <variation>R</variation>
    <location>
        <position position="959"/>
    </location>
</feature>
<feature type="sequence conflict" description="In Ref. 1; AAD26532/AAD26531." evidence="4" ref="1">
    <original>E</original>
    <variation>K</variation>
    <location>
        <position position="1219"/>
    </location>
</feature>
<gene>
    <name type="primary">Vars1</name>
    <name type="synonym">Bat6</name>
    <name type="synonym">G7a</name>
    <name type="synonym">Vars</name>
    <name type="synonym">Vars2</name>
</gene>